<organism>
    <name type="scientific">Bacillus subtilis (strain 168)</name>
    <dbReference type="NCBI Taxonomy" id="224308"/>
    <lineage>
        <taxon>Bacteria</taxon>
        <taxon>Bacillati</taxon>
        <taxon>Bacillota</taxon>
        <taxon>Bacilli</taxon>
        <taxon>Bacillales</taxon>
        <taxon>Bacillaceae</taxon>
        <taxon>Bacillus</taxon>
    </lineage>
</organism>
<name>ACUB_BACSU</name>
<sequence length="214" mass="24352">MIVEQIMKRDVITLTKTDTLETAICKLKEFHIRHLPVVDEERHVIGMITDRDMKQASPSIFEENKRSLFLTRSVDSIMKKDVVCAHPLDFVEEISAVFYEHGIGCLPVVHHQKLIGILTKTDLLRTFVKLTGADQPGSQIEIKVNDITKSLAEISSLCQDLQVKILSVLVYPHDDPGVKVLVFRVKTMNPLPFLQALQRNGHHVVWPSEQRDLL</sequence>
<accession>P39066</accession>
<comment type="function">
    <text>Role in growth and sporulation on acetoin or butanediol. Involved in the breakdown of these compounds used as a carbon source.</text>
</comment>
<comment type="pathway">
    <text>Ketone degradation; acetoin degradation.</text>
</comment>
<comment type="subunit">
    <text evidence="2">Interacts with YabA (PubMed:12060778).</text>
</comment>
<protein>
    <recommendedName>
        <fullName>Acetoin utilization protein AcuB</fullName>
    </recommendedName>
</protein>
<dbReference type="EMBL" id="L17309">
    <property type="protein sequence ID" value="AAA68285.1"/>
    <property type="molecule type" value="Genomic_DNA"/>
</dbReference>
<dbReference type="EMBL" id="AF008220">
    <property type="protein sequence ID" value="AAC00395.1"/>
    <property type="molecule type" value="Genomic_DNA"/>
</dbReference>
<dbReference type="EMBL" id="AL009126">
    <property type="protein sequence ID" value="CAB14948.1"/>
    <property type="molecule type" value="Genomic_DNA"/>
</dbReference>
<dbReference type="PIR" id="S39644">
    <property type="entry name" value="S39644"/>
</dbReference>
<dbReference type="RefSeq" id="NP_390848.1">
    <property type="nucleotide sequence ID" value="NC_000964.3"/>
</dbReference>
<dbReference type="RefSeq" id="WP_003229294.1">
    <property type="nucleotide sequence ID" value="NZ_OZ025638.1"/>
</dbReference>
<dbReference type="SMR" id="P39066"/>
<dbReference type="DIP" id="DIP-61108N"/>
<dbReference type="FunCoup" id="P39066">
    <property type="interactions" value="40"/>
</dbReference>
<dbReference type="IntAct" id="P39066">
    <property type="interactions" value="1"/>
</dbReference>
<dbReference type="STRING" id="224308.BSU29700"/>
<dbReference type="PaxDb" id="224308-BSU29700"/>
<dbReference type="EnsemblBacteria" id="CAB14948">
    <property type="protein sequence ID" value="CAB14948"/>
    <property type="gene ID" value="BSU_29700"/>
</dbReference>
<dbReference type="GeneID" id="937318"/>
<dbReference type="KEGG" id="bsu:BSU29700"/>
<dbReference type="PATRIC" id="fig|224308.179.peg.3228"/>
<dbReference type="eggNOG" id="COG0517">
    <property type="taxonomic scope" value="Bacteria"/>
</dbReference>
<dbReference type="InParanoid" id="P39066"/>
<dbReference type="OrthoDB" id="9781631at2"/>
<dbReference type="PhylomeDB" id="P39066"/>
<dbReference type="BioCyc" id="BSUB:BSU29700-MONOMER"/>
<dbReference type="UniPathway" id="UPA00040"/>
<dbReference type="Proteomes" id="UP000001570">
    <property type="component" value="Chromosome"/>
</dbReference>
<dbReference type="GO" id="GO:0045150">
    <property type="term" value="P:acetoin catabolic process"/>
    <property type="evidence" value="ECO:0007669"/>
    <property type="project" value="UniProtKB-UniPathway"/>
</dbReference>
<dbReference type="GO" id="GO:0030435">
    <property type="term" value="P:sporulation resulting in formation of a cellular spore"/>
    <property type="evidence" value="ECO:0007669"/>
    <property type="project" value="UniProtKB-KW"/>
</dbReference>
<dbReference type="CDD" id="cd04883">
    <property type="entry name" value="ACT_AcuB"/>
    <property type="match status" value="1"/>
</dbReference>
<dbReference type="CDD" id="cd04584">
    <property type="entry name" value="CBS_pair_AcuB_like"/>
    <property type="match status" value="1"/>
</dbReference>
<dbReference type="Gene3D" id="3.10.580.10">
    <property type="entry name" value="CBS-domain"/>
    <property type="match status" value="1"/>
</dbReference>
<dbReference type="InterPro" id="IPR000644">
    <property type="entry name" value="CBS_dom"/>
</dbReference>
<dbReference type="InterPro" id="IPR046342">
    <property type="entry name" value="CBS_dom_sf"/>
</dbReference>
<dbReference type="InterPro" id="IPR051257">
    <property type="entry name" value="Diverse_CBS-Domain"/>
</dbReference>
<dbReference type="PANTHER" id="PTHR43080:SF2">
    <property type="entry name" value="CBS DOMAIN-CONTAINING PROTEIN"/>
    <property type="match status" value="1"/>
</dbReference>
<dbReference type="PANTHER" id="PTHR43080">
    <property type="entry name" value="CBS DOMAIN-CONTAINING PROTEIN CBSX3, MITOCHONDRIAL"/>
    <property type="match status" value="1"/>
</dbReference>
<dbReference type="Pfam" id="PF00571">
    <property type="entry name" value="CBS"/>
    <property type="match status" value="2"/>
</dbReference>
<dbReference type="SMART" id="SM00116">
    <property type="entry name" value="CBS"/>
    <property type="match status" value="2"/>
</dbReference>
<dbReference type="SUPFAM" id="SSF54631">
    <property type="entry name" value="CBS-domain pair"/>
    <property type="match status" value="1"/>
</dbReference>
<dbReference type="PROSITE" id="PS51371">
    <property type="entry name" value="CBS"/>
    <property type="match status" value="2"/>
</dbReference>
<proteinExistence type="evidence at protein level"/>
<reference key="1">
    <citation type="journal article" date="1993" name="Mol. Microbiol.">
        <title>Identification of genes involved in utilization of acetate and acetoin in Bacillus subtilis.</title>
        <authorList>
            <person name="Grundy F.J."/>
            <person name="Waters D.A."/>
            <person name="Takova T.Y."/>
            <person name="Henkin T.M."/>
        </authorList>
    </citation>
    <scope>NUCLEOTIDE SEQUENCE [GENOMIC DNA]</scope>
    <source>
        <strain>168</strain>
    </source>
</reference>
<reference key="2">
    <citation type="journal article" date="1997" name="Microbiology">
        <title>Sequencing and functional annotation of the Bacillus subtilis genes in the 200 kb rrnB-dnaB region.</title>
        <authorList>
            <person name="Lapidus A."/>
            <person name="Galleron N."/>
            <person name="Sorokin A."/>
            <person name="Ehrlich S.D."/>
        </authorList>
    </citation>
    <scope>NUCLEOTIDE SEQUENCE [GENOMIC DNA]</scope>
    <source>
        <strain>168</strain>
    </source>
</reference>
<reference key="3">
    <citation type="journal article" date="1997" name="Nature">
        <title>The complete genome sequence of the Gram-positive bacterium Bacillus subtilis.</title>
        <authorList>
            <person name="Kunst F."/>
            <person name="Ogasawara N."/>
            <person name="Moszer I."/>
            <person name="Albertini A.M."/>
            <person name="Alloni G."/>
            <person name="Azevedo V."/>
            <person name="Bertero M.G."/>
            <person name="Bessieres P."/>
            <person name="Bolotin A."/>
            <person name="Borchert S."/>
            <person name="Borriss R."/>
            <person name="Boursier L."/>
            <person name="Brans A."/>
            <person name="Braun M."/>
            <person name="Brignell S.C."/>
            <person name="Bron S."/>
            <person name="Brouillet S."/>
            <person name="Bruschi C.V."/>
            <person name="Caldwell B."/>
            <person name="Capuano V."/>
            <person name="Carter N.M."/>
            <person name="Choi S.-K."/>
            <person name="Codani J.-J."/>
            <person name="Connerton I.F."/>
            <person name="Cummings N.J."/>
            <person name="Daniel R.A."/>
            <person name="Denizot F."/>
            <person name="Devine K.M."/>
            <person name="Duesterhoeft A."/>
            <person name="Ehrlich S.D."/>
            <person name="Emmerson P.T."/>
            <person name="Entian K.-D."/>
            <person name="Errington J."/>
            <person name="Fabret C."/>
            <person name="Ferrari E."/>
            <person name="Foulger D."/>
            <person name="Fritz C."/>
            <person name="Fujita M."/>
            <person name="Fujita Y."/>
            <person name="Fuma S."/>
            <person name="Galizzi A."/>
            <person name="Galleron N."/>
            <person name="Ghim S.-Y."/>
            <person name="Glaser P."/>
            <person name="Goffeau A."/>
            <person name="Golightly E.J."/>
            <person name="Grandi G."/>
            <person name="Guiseppi G."/>
            <person name="Guy B.J."/>
            <person name="Haga K."/>
            <person name="Haiech J."/>
            <person name="Harwood C.R."/>
            <person name="Henaut A."/>
            <person name="Hilbert H."/>
            <person name="Holsappel S."/>
            <person name="Hosono S."/>
            <person name="Hullo M.-F."/>
            <person name="Itaya M."/>
            <person name="Jones L.-M."/>
            <person name="Joris B."/>
            <person name="Karamata D."/>
            <person name="Kasahara Y."/>
            <person name="Klaerr-Blanchard M."/>
            <person name="Klein C."/>
            <person name="Kobayashi Y."/>
            <person name="Koetter P."/>
            <person name="Koningstein G."/>
            <person name="Krogh S."/>
            <person name="Kumano M."/>
            <person name="Kurita K."/>
            <person name="Lapidus A."/>
            <person name="Lardinois S."/>
            <person name="Lauber J."/>
            <person name="Lazarevic V."/>
            <person name="Lee S.-M."/>
            <person name="Levine A."/>
            <person name="Liu H."/>
            <person name="Masuda S."/>
            <person name="Mauel C."/>
            <person name="Medigue C."/>
            <person name="Medina N."/>
            <person name="Mellado R.P."/>
            <person name="Mizuno M."/>
            <person name="Moestl D."/>
            <person name="Nakai S."/>
            <person name="Noback M."/>
            <person name="Noone D."/>
            <person name="O'Reilly M."/>
            <person name="Ogawa K."/>
            <person name="Ogiwara A."/>
            <person name="Oudega B."/>
            <person name="Park S.-H."/>
            <person name="Parro V."/>
            <person name="Pohl T.M."/>
            <person name="Portetelle D."/>
            <person name="Porwollik S."/>
            <person name="Prescott A.M."/>
            <person name="Presecan E."/>
            <person name="Pujic P."/>
            <person name="Purnelle B."/>
            <person name="Rapoport G."/>
            <person name="Rey M."/>
            <person name="Reynolds S."/>
            <person name="Rieger M."/>
            <person name="Rivolta C."/>
            <person name="Rocha E."/>
            <person name="Roche B."/>
            <person name="Rose M."/>
            <person name="Sadaie Y."/>
            <person name="Sato T."/>
            <person name="Scanlan E."/>
            <person name="Schleich S."/>
            <person name="Schroeter R."/>
            <person name="Scoffone F."/>
            <person name="Sekiguchi J."/>
            <person name="Sekowska A."/>
            <person name="Seror S.J."/>
            <person name="Serror P."/>
            <person name="Shin B.-S."/>
            <person name="Soldo B."/>
            <person name="Sorokin A."/>
            <person name="Tacconi E."/>
            <person name="Takagi T."/>
            <person name="Takahashi H."/>
            <person name="Takemaru K."/>
            <person name="Takeuchi M."/>
            <person name="Tamakoshi A."/>
            <person name="Tanaka T."/>
            <person name="Terpstra P."/>
            <person name="Tognoni A."/>
            <person name="Tosato V."/>
            <person name="Uchiyama S."/>
            <person name="Vandenbol M."/>
            <person name="Vannier F."/>
            <person name="Vassarotti A."/>
            <person name="Viari A."/>
            <person name="Wambutt R."/>
            <person name="Wedler E."/>
            <person name="Wedler H."/>
            <person name="Weitzenegger T."/>
            <person name="Winters P."/>
            <person name="Wipat A."/>
            <person name="Yamamoto H."/>
            <person name="Yamane K."/>
            <person name="Yasumoto K."/>
            <person name="Yata K."/>
            <person name="Yoshida K."/>
            <person name="Yoshikawa H.-F."/>
            <person name="Zumstein E."/>
            <person name="Yoshikawa H."/>
            <person name="Danchin A."/>
        </authorList>
    </citation>
    <scope>NUCLEOTIDE SEQUENCE [LARGE SCALE GENOMIC DNA]</scope>
    <source>
        <strain>168</strain>
    </source>
</reference>
<reference key="4">
    <citation type="journal article" date="2002" name="Proc. Natl. Acad. Sci. U.S.A.">
        <title>An expanded view of bacterial DNA replication.</title>
        <authorList>
            <person name="Noirot-Gros M.-F."/>
            <person name="Dervyn E."/>
            <person name="Wu L.J."/>
            <person name="Mervelet P."/>
            <person name="Errington J."/>
            <person name="Ehrlich S.D."/>
            <person name="Noirot P."/>
        </authorList>
    </citation>
    <scope>INTERACTION WITH YABA</scope>
    <source>
        <strain>168</strain>
    </source>
</reference>
<feature type="chain" id="PRO_0000064446" description="Acetoin utilization protein AcuB">
    <location>
        <begin position="1"/>
        <end position="214"/>
    </location>
</feature>
<feature type="domain" description="CBS 1" evidence="1">
    <location>
        <begin position="7"/>
        <end position="66"/>
    </location>
</feature>
<feature type="domain" description="CBS 2" evidence="1">
    <location>
        <begin position="78"/>
        <end position="135"/>
    </location>
</feature>
<evidence type="ECO:0000255" key="1">
    <source>
        <dbReference type="PROSITE-ProRule" id="PRU00703"/>
    </source>
</evidence>
<evidence type="ECO:0000269" key="2">
    <source>
    </source>
</evidence>
<gene>
    <name type="primary">acuB</name>
    <name type="ordered locus">BSU29700</name>
</gene>
<keyword id="KW-0006">Acetoin catabolism</keyword>
<keyword id="KW-0129">CBS domain</keyword>
<keyword id="KW-1185">Reference proteome</keyword>
<keyword id="KW-0677">Repeat</keyword>
<keyword id="KW-0749">Sporulation</keyword>